<proteinExistence type="inferred from homology"/>
<feature type="chain" id="PRO_0000375322" description="YcgL domain-containing protein PBPRA1080">
    <location>
        <begin position="1"/>
        <end position="92"/>
    </location>
</feature>
<feature type="domain" description="YcgL" evidence="1">
    <location>
        <begin position="1"/>
        <end position="84"/>
    </location>
</feature>
<keyword id="KW-1185">Reference proteome</keyword>
<comment type="sequence caution" evidence="2">
    <conflict type="erroneous initiation">
        <sequence resource="EMBL-CDS" id="CAG19491"/>
    </conflict>
</comment>
<evidence type="ECO:0000255" key="1">
    <source>
        <dbReference type="HAMAP-Rule" id="MF_01866"/>
    </source>
</evidence>
<evidence type="ECO:0000305" key="2"/>
<name>Y1080_PHOPR</name>
<accession>Q6LT85</accession>
<protein>
    <recommendedName>
        <fullName evidence="1">YcgL domain-containing protein PBPRA1080</fullName>
    </recommendedName>
</protein>
<dbReference type="EMBL" id="CR378666">
    <property type="protein sequence ID" value="CAG19491.1"/>
    <property type="status" value="ALT_INIT"/>
    <property type="molecule type" value="Genomic_DNA"/>
</dbReference>
<dbReference type="RefSeq" id="WP_041393964.1">
    <property type="nucleotide sequence ID" value="NC_006370.1"/>
</dbReference>
<dbReference type="SMR" id="Q6LT85"/>
<dbReference type="STRING" id="298386.PBPRA1080"/>
<dbReference type="KEGG" id="ppr:PBPRA1080"/>
<dbReference type="eggNOG" id="COG3100">
    <property type="taxonomic scope" value="Bacteria"/>
</dbReference>
<dbReference type="HOGENOM" id="CLU_155118_1_0_6"/>
<dbReference type="Proteomes" id="UP000000593">
    <property type="component" value="Chromosome 1"/>
</dbReference>
<dbReference type="Gene3D" id="3.10.510.20">
    <property type="entry name" value="YcgL domain"/>
    <property type="match status" value="1"/>
</dbReference>
<dbReference type="HAMAP" id="MF_01866">
    <property type="entry name" value="UPF0745"/>
    <property type="match status" value="1"/>
</dbReference>
<dbReference type="InterPro" id="IPR038068">
    <property type="entry name" value="YcgL-like_sf"/>
</dbReference>
<dbReference type="InterPro" id="IPR027354">
    <property type="entry name" value="YcgL_dom"/>
</dbReference>
<dbReference type="PANTHER" id="PTHR38109">
    <property type="entry name" value="PROTEIN YCGL"/>
    <property type="match status" value="1"/>
</dbReference>
<dbReference type="PANTHER" id="PTHR38109:SF1">
    <property type="entry name" value="PROTEIN YCGL"/>
    <property type="match status" value="1"/>
</dbReference>
<dbReference type="Pfam" id="PF05166">
    <property type="entry name" value="YcgL"/>
    <property type="match status" value="1"/>
</dbReference>
<dbReference type="SUPFAM" id="SSF160191">
    <property type="entry name" value="YcgL-like"/>
    <property type="match status" value="1"/>
</dbReference>
<dbReference type="PROSITE" id="PS51648">
    <property type="entry name" value="YCGL"/>
    <property type="match status" value="1"/>
</dbReference>
<organism>
    <name type="scientific">Photobacterium profundum (strain SS9)</name>
    <dbReference type="NCBI Taxonomy" id="298386"/>
    <lineage>
        <taxon>Bacteria</taxon>
        <taxon>Pseudomonadati</taxon>
        <taxon>Pseudomonadota</taxon>
        <taxon>Gammaproteobacteria</taxon>
        <taxon>Vibrionales</taxon>
        <taxon>Vibrionaceae</taxon>
        <taxon>Photobacterium</taxon>
    </lineage>
</organism>
<reference key="1">
    <citation type="journal article" date="2005" name="Science">
        <title>Life at depth: Photobacterium profundum genome sequence and expression analysis.</title>
        <authorList>
            <person name="Vezzi A."/>
            <person name="Campanaro S."/>
            <person name="D'Angelo M."/>
            <person name="Simonato F."/>
            <person name="Vitulo N."/>
            <person name="Lauro F.M."/>
            <person name="Cestaro A."/>
            <person name="Malacrida G."/>
            <person name="Simionati B."/>
            <person name="Cannata N."/>
            <person name="Romualdi C."/>
            <person name="Bartlett D.H."/>
            <person name="Valle G."/>
        </authorList>
    </citation>
    <scope>NUCLEOTIDE SEQUENCE [LARGE SCALE GENOMIC DNA]</scope>
    <source>
        <strain>ATCC BAA-1253 / SS9</strain>
    </source>
</reference>
<sequence>MLCSIYKSSKKENTYLYINNKDDFSDVPDSLMGTFGAPQFVMVLKLEGRKLALADVEKVKESLATVGYYLQVPPPVTNLLHQYKAAKASQTS</sequence>
<gene>
    <name type="ordered locus">PBPRA1080</name>
</gene>